<name>RS9_STRS2</name>
<dbReference type="EMBL" id="CP000408">
    <property type="protein sequence ID" value="ABP93057.1"/>
    <property type="molecule type" value="Genomic_DNA"/>
</dbReference>
<dbReference type="SMR" id="A4W3W8"/>
<dbReference type="KEGG" id="ssv:SSU98_1899"/>
<dbReference type="HOGENOM" id="CLU_046483_2_1_9"/>
<dbReference type="GO" id="GO:0022627">
    <property type="term" value="C:cytosolic small ribosomal subunit"/>
    <property type="evidence" value="ECO:0007669"/>
    <property type="project" value="TreeGrafter"/>
</dbReference>
<dbReference type="GO" id="GO:0003723">
    <property type="term" value="F:RNA binding"/>
    <property type="evidence" value="ECO:0007669"/>
    <property type="project" value="TreeGrafter"/>
</dbReference>
<dbReference type="GO" id="GO:0003735">
    <property type="term" value="F:structural constituent of ribosome"/>
    <property type="evidence" value="ECO:0007669"/>
    <property type="project" value="InterPro"/>
</dbReference>
<dbReference type="GO" id="GO:0006412">
    <property type="term" value="P:translation"/>
    <property type="evidence" value="ECO:0007669"/>
    <property type="project" value="UniProtKB-UniRule"/>
</dbReference>
<dbReference type="FunFam" id="3.30.230.10:FF:000001">
    <property type="entry name" value="30S ribosomal protein S9"/>
    <property type="match status" value="1"/>
</dbReference>
<dbReference type="Gene3D" id="3.30.230.10">
    <property type="match status" value="1"/>
</dbReference>
<dbReference type="HAMAP" id="MF_00532_B">
    <property type="entry name" value="Ribosomal_uS9_B"/>
    <property type="match status" value="1"/>
</dbReference>
<dbReference type="InterPro" id="IPR020568">
    <property type="entry name" value="Ribosomal_Su5_D2-typ_SF"/>
</dbReference>
<dbReference type="InterPro" id="IPR000754">
    <property type="entry name" value="Ribosomal_uS9"/>
</dbReference>
<dbReference type="InterPro" id="IPR023035">
    <property type="entry name" value="Ribosomal_uS9_bac/plastid"/>
</dbReference>
<dbReference type="InterPro" id="IPR020574">
    <property type="entry name" value="Ribosomal_uS9_CS"/>
</dbReference>
<dbReference type="InterPro" id="IPR014721">
    <property type="entry name" value="Ribsml_uS5_D2-typ_fold_subgr"/>
</dbReference>
<dbReference type="NCBIfam" id="NF001099">
    <property type="entry name" value="PRK00132.1"/>
    <property type="match status" value="1"/>
</dbReference>
<dbReference type="PANTHER" id="PTHR21569">
    <property type="entry name" value="RIBOSOMAL PROTEIN S9"/>
    <property type="match status" value="1"/>
</dbReference>
<dbReference type="PANTHER" id="PTHR21569:SF1">
    <property type="entry name" value="SMALL RIBOSOMAL SUBUNIT PROTEIN US9M"/>
    <property type="match status" value="1"/>
</dbReference>
<dbReference type="Pfam" id="PF00380">
    <property type="entry name" value="Ribosomal_S9"/>
    <property type="match status" value="1"/>
</dbReference>
<dbReference type="SUPFAM" id="SSF54211">
    <property type="entry name" value="Ribosomal protein S5 domain 2-like"/>
    <property type="match status" value="1"/>
</dbReference>
<dbReference type="PROSITE" id="PS00360">
    <property type="entry name" value="RIBOSOMAL_S9"/>
    <property type="match status" value="1"/>
</dbReference>
<organism>
    <name type="scientific">Streptococcus suis (strain 98HAH33)</name>
    <dbReference type="NCBI Taxonomy" id="391296"/>
    <lineage>
        <taxon>Bacteria</taxon>
        <taxon>Bacillati</taxon>
        <taxon>Bacillota</taxon>
        <taxon>Bacilli</taxon>
        <taxon>Lactobacillales</taxon>
        <taxon>Streptococcaceae</taxon>
        <taxon>Streptococcus</taxon>
    </lineage>
</organism>
<evidence type="ECO:0000255" key="1">
    <source>
        <dbReference type="HAMAP-Rule" id="MF_00532"/>
    </source>
</evidence>
<evidence type="ECO:0000305" key="2"/>
<protein>
    <recommendedName>
        <fullName evidence="1">Small ribosomal subunit protein uS9</fullName>
    </recommendedName>
    <alternativeName>
        <fullName evidence="2">30S ribosomal protein S9</fullName>
    </alternativeName>
</protein>
<sequence>MAQAQYTGTGRRKNAVARVRLVPGTGKITVNKKDVEEYIPHADLRLVINQPFAVTSTQGSYDVFVNVNGGGYGGQSGAIRHGIARALLQVDPDFRDSLKRAGLLTRDARMVERKKPGLKKARKASQFSKR</sequence>
<accession>A4W3W8</accession>
<reference key="1">
    <citation type="journal article" date="2007" name="PLoS ONE">
        <title>A glimpse of streptococcal toxic shock syndrome from comparative genomics of S. suis 2 Chinese isolates.</title>
        <authorList>
            <person name="Chen C."/>
            <person name="Tang J."/>
            <person name="Dong W."/>
            <person name="Wang C."/>
            <person name="Feng Y."/>
            <person name="Wang J."/>
            <person name="Zheng F."/>
            <person name="Pan X."/>
            <person name="Liu D."/>
            <person name="Li M."/>
            <person name="Song Y."/>
            <person name="Zhu X."/>
            <person name="Sun H."/>
            <person name="Feng T."/>
            <person name="Guo Z."/>
            <person name="Ju A."/>
            <person name="Ge J."/>
            <person name="Dong Y."/>
            <person name="Sun W."/>
            <person name="Jiang Y."/>
            <person name="Wang J."/>
            <person name="Yan J."/>
            <person name="Yang H."/>
            <person name="Wang X."/>
            <person name="Gao G.F."/>
            <person name="Yang R."/>
            <person name="Wang J."/>
            <person name="Yu J."/>
        </authorList>
    </citation>
    <scope>NUCLEOTIDE SEQUENCE [LARGE SCALE GENOMIC DNA]</scope>
    <source>
        <strain>98HAH33</strain>
    </source>
</reference>
<proteinExistence type="inferred from homology"/>
<feature type="chain" id="PRO_1000051346" description="Small ribosomal subunit protein uS9">
    <location>
        <begin position="1"/>
        <end position="130"/>
    </location>
</feature>
<gene>
    <name evidence="1" type="primary">rpsI</name>
    <name type="ordered locus">SSU98_1899</name>
</gene>
<keyword id="KW-0687">Ribonucleoprotein</keyword>
<keyword id="KW-0689">Ribosomal protein</keyword>
<comment type="similarity">
    <text evidence="1">Belongs to the universal ribosomal protein uS9 family.</text>
</comment>